<organism>
    <name type="scientific">Salmonella typhimurium (strain LT2 / SGSC1412 / ATCC 700720)</name>
    <dbReference type="NCBI Taxonomy" id="99287"/>
    <lineage>
        <taxon>Bacteria</taxon>
        <taxon>Pseudomonadati</taxon>
        <taxon>Pseudomonadota</taxon>
        <taxon>Gammaproteobacteria</taxon>
        <taxon>Enterobacterales</taxon>
        <taxon>Enterobacteriaceae</taxon>
        <taxon>Salmonella</taxon>
    </lineage>
</organism>
<evidence type="ECO:0000250" key="1"/>
<evidence type="ECO:0000255" key="2">
    <source>
        <dbReference type="HAMAP-Rule" id="MF_00600"/>
    </source>
</evidence>
<evidence type="ECO:0000269" key="3">
    <source>
    </source>
</evidence>
<reference key="1">
    <citation type="journal article" date="2001" name="Nature">
        <title>Complete genome sequence of Salmonella enterica serovar Typhimurium LT2.</title>
        <authorList>
            <person name="McClelland M."/>
            <person name="Sanderson K.E."/>
            <person name="Spieth J."/>
            <person name="Clifton S.W."/>
            <person name="Latreille P."/>
            <person name="Courtney L."/>
            <person name="Porwollik S."/>
            <person name="Ali J."/>
            <person name="Dante M."/>
            <person name="Du F."/>
            <person name="Hou S."/>
            <person name="Layman D."/>
            <person name="Leonard S."/>
            <person name="Nguyen C."/>
            <person name="Scott K."/>
            <person name="Holmes A."/>
            <person name="Grewal N."/>
            <person name="Mulvaney E."/>
            <person name="Ryan E."/>
            <person name="Sun H."/>
            <person name="Florea L."/>
            <person name="Miller W."/>
            <person name="Stoneking T."/>
            <person name="Nhan M."/>
            <person name="Waterston R."/>
            <person name="Wilson R.K."/>
        </authorList>
    </citation>
    <scope>NUCLEOTIDE SEQUENCE [LARGE SCALE GENOMIC DNA]</scope>
    <source>
        <strain>LT2 / SGSC1412 / ATCC 700720</strain>
    </source>
</reference>
<reference key="2">
    <citation type="journal article" date="2020" name="Cell Rep.">
        <title>The YdiU Domain Modulates Bacterial Stress Signaling through Mn2+-Dependent UMPylation.</title>
        <authorList>
            <person name="Yang Y."/>
            <person name="Yue Y."/>
            <person name="Song N."/>
            <person name="Li C."/>
            <person name="Yuan Z."/>
            <person name="Wang Y."/>
            <person name="Ma Y."/>
            <person name="Li H."/>
            <person name="Zhang F."/>
            <person name="Wang W."/>
            <person name="Jia H."/>
            <person name="Li P."/>
            <person name="Li X."/>
            <person name="Wang Q."/>
            <person name="Ding Z."/>
            <person name="Dong H."/>
            <person name="Gu L."/>
            <person name="Li B."/>
        </authorList>
    </citation>
    <scope>ACTIVITY REGULATION</scope>
    <scope>URIDYLYLATION</scope>
    <source>
        <strain>ATCC 14028 / SGSC 2980 / CDC 6516-60 / NCTC 12023</strain>
    </source>
</reference>
<keyword id="KW-0067">ATP-binding</keyword>
<keyword id="KW-0143">Chaperone</keyword>
<keyword id="KW-0963">Cytoplasm</keyword>
<keyword id="KW-0413">Isomerase</keyword>
<keyword id="KW-0547">Nucleotide-binding</keyword>
<keyword id="KW-1185">Reference proteome</keyword>
<comment type="function">
    <text evidence="2">Together with its co-chaperonin GroES, plays an essential role in assisting protein folding. The GroEL-GroES system forms a nano-cage that allows encapsulation of the non-native substrate proteins and provides a physical environment optimized to promote and accelerate protein folding.</text>
</comment>
<comment type="catalytic activity">
    <reaction evidence="2">
        <text>ATP + H2O + a folded polypeptide = ADP + phosphate + an unfolded polypeptide.</text>
        <dbReference type="EC" id="5.6.1.7"/>
    </reaction>
</comment>
<comment type="activity regulation">
    <text evidence="3">UMPylation of the chaperone by YdiU negatively regulates its activity, facilitating Salmonella survival under ATP-limited conditions.</text>
</comment>
<comment type="subunit">
    <text evidence="2">Forms a cylinder of 14 subunits composed of two heptameric rings stacked back-to-back. Interacts with the co-chaperonin GroES.</text>
</comment>
<comment type="subcellular location">
    <subcellularLocation>
        <location evidence="2">Cytoplasm</location>
    </subcellularLocation>
</comment>
<comment type="PTM">
    <text evidence="3">UMPylated on a tyrosine residue by YdiU under ATP-limited conditions.</text>
</comment>
<comment type="similarity">
    <text evidence="2">Belongs to the chaperonin (HSP60) family.</text>
</comment>
<proteinExistence type="inferred from homology"/>
<name>CH60_SALTY</name>
<gene>
    <name evidence="2" type="primary">groEL</name>
    <name evidence="2" type="synonym">groL</name>
    <name type="synonym">mopA</name>
    <name type="ordered locus">STM4330</name>
</gene>
<dbReference type="EC" id="5.6.1.7" evidence="2"/>
<dbReference type="EMBL" id="AE006468">
    <property type="protein sequence ID" value="AAL23153.1"/>
    <property type="molecule type" value="Genomic_DNA"/>
</dbReference>
<dbReference type="RefSeq" id="NP_463194.1">
    <property type="nucleotide sequence ID" value="NC_003197.2"/>
</dbReference>
<dbReference type="RefSeq" id="WP_000729126.1">
    <property type="nucleotide sequence ID" value="NC_003197.2"/>
</dbReference>
<dbReference type="SMR" id="P0A1D3"/>
<dbReference type="STRING" id="99287.STM4330"/>
<dbReference type="MoonProt" id="P0A1D3"/>
<dbReference type="PaxDb" id="99287-STM4330"/>
<dbReference type="GeneID" id="1255856"/>
<dbReference type="KEGG" id="stm:STM4330"/>
<dbReference type="PATRIC" id="fig|99287.12.peg.4556"/>
<dbReference type="HOGENOM" id="CLU_016503_3_0_6"/>
<dbReference type="OMA" id="TDTDKME"/>
<dbReference type="PhylomeDB" id="P0A1D3"/>
<dbReference type="BioCyc" id="SENT99287:STM4330-MONOMER"/>
<dbReference type="Proteomes" id="UP000001014">
    <property type="component" value="Chromosome"/>
</dbReference>
<dbReference type="GO" id="GO:1990220">
    <property type="term" value="C:GroEL-GroES complex"/>
    <property type="evidence" value="ECO:0000318"/>
    <property type="project" value="GO_Central"/>
</dbReference>
<dbReference type="GO" id="GO:0005524">
    <property type="term" value="F:ATP binding"/>
    <property type="evidence" value="ECO:0000318"/>
    <property type="project" value="GO_Central"/>
</dbReference>
<dbReference type="GO" id="GO:0140662">
    <property type="term" value="F:ATP-dependent protein folding chaperone"/>
    <property type="evidence" value="ECO:0007669"/>
    <property type="project" value="InterPro"/>
</dbReference>
<dbReference type="GO" id="GO:0016853">
    <property type="term" value="F:isomerase activity"/>
    <property type="evidence" value="ECO:0007669"/>
    <property type="project" value="UniProtKB-KW"/>
</dbReference>
<dbReference type="GO" id="GO:0051082">
    <property type="term" value="F:unfolded protein binding"/>
    <property type="evidence" value="ECO:0000318"/>
    <property type="project" value="GO_Central"/>
</dbReference>
<dbReference type="GO" id="GO:0051085">
    <property type="term" value="P:chaperone cofactor-dependent protein refolding"/>
    <property type="evidence" value="ECO:0000318"/>
    <property type="project" value="GO_Central"/>
</dbReference>
<dbReference type="GO" id="GO:0042026">
    <property type="term" value="P:protein refolding"/>
    <property type="evidence" value="ECO:0007669"/>
    <property type="project" value="UniProtKB-UniRule"/>
</dbReference>
<dbReference type="GO" id="GO:0009408">
    <property type="term" value="P:response to heat"/>
    <property type="evidence" value="ECO:0000318"/>
    <property type="project" value="GO_Central"/>
</dbReference>
<dbReference type="CDD" id="cd03344">
    <property type="entry name" value="GroEL"/>
    <property type="match status" value="1"/>
</dbReference>
<dbReference type="FunFam" id="1.10.560.10:FF:000001">
    <property type="entry name" value="60 kDa chaperonin"/>
    <property type="match status" value="1"/>
</dbReference>
<dbReference type="FunFam" id="3.50.7.10:FF:000001">
    <property type="entry name" value="60 kDa chaperonin"/>
    <property type="match status" value="1"/>
</dbReference>
<dbReference type="Gene3D" id="3.50.7.10">
    <property type="entry name" value="GroEL"/>
    <property type="match status" value="1"/>
</dbReference>
<dbReference type="Gene3D" id="1.10.560.10">
    <property type="entry name" value="GroEL-like equatorial domain"/>
    <property type="match status" value="1"/>
</dbReference>
<dbReference type="Gene3D" id="3.30.260.10">
    <property type="entry name" value="TCP-1-like chaperonin intermediate domain"/>
    <property type="match status" value="1"/>
</dbReference>
<dbReference type="HAMAP" id="MF_00600">
    <property type="entry name" value="CH60"/>
    <property type="match status" value="1"/>
</dbReference>
<dbReference type="InterPro" id="IPR018370">
    <property type="entry name" value="Chaperonin_Cpn60_CS"/>
</dbReference>
<dbReference type="InterPro" id="IPR001844">
    <property type="entry name" value="Cpn60/GroEL"/>
</dbReference>
<dbReference type="InterPro" id="IPR002423">
    <property type="entry name" value="Cpn60/GroEL/TCP-1"/>
</dbReference>
<dbReference type="InterPro" id="IPR027409">
    <property type="entry name" value="GroEL-like_apical_dom_sf"/>
</dbReference>
<dbReference type="InterPro" id="IPR027413">
    <property type="entry name" value="GROEL-like_equatorial_sf"/>
</dbReference>
<dbReference type="InterPro" id="IPR027410">
    <property type="entry name" value="TCP-1-like_intermed_sf"/>
</dbReference>
<dbReference type="NCBIfam" id="TIGR02348">
    <property type="entry name" value="GroEL"/>
    <property type="match status" value="1"/>
</dbReference>
<dbReference type="NCBIfam" id="NF000592">
    <property type="entry name" value="PRK00013.1"/>
    <property type="match status" value="1"/>
</dbReference>
<dbReference type="NCBIfam" id="NF009487">
    <property type="entry name" value="PRK12849.1"/>
    <property type="match status" value="1"/>
</dbReference>
<dbReference type="NCBIfam" id="NF009488">
    <property type="entry name" value="PRK12850.1"/>
    <property type="match status" value="1"/>
</dbReference>
<dbReference type="NCBIfam" id="NF009489">
    <property type="entry name" value="PRK12851.1"/>
    <property type="match status" value="1"/>
</dbReference>
<dbReference type="PANTHER" id="PTHR45633">
    <property type="entry name" value="60 KDA HEAT SHOCK PROTEIN, MITOCHONDRIAL"/>
    <property type="match status" value="1"/>
</dbReference>
<dbReference type="Pfam" id="PF00118">
    <property type="entry name" value="Cpn60_TCP1"/>
    <property type="match status" value="1"/>
</dbReference>
<dbReference type="PRINTS" id="PR00298">
    <property type="entry name" value="CHAPERONIN60"/>
</dbReference>
<dbReference type="SUPFAM" id="SSF52029">
    <property type="entry name" value="GroEL apical domain-like"/>
    <property type="match status" value="1"/>
</dbReference>
<dbReference type="SUPFAM" id="SSF48592">
    <property type="entry name" value="GroEL equatorial domain-like"/>
    <property type="match status" value="1"/>
</dbReference>
<dbReference type="SUPFAM" id="SSF54849">
    <property type="entry name" value="GroEL-intermediate domain like"/>
    <property type="match status" value="1"/>
</dbReference>
<dbReference type="PROSITE" id="PS00296">
    <property type="entry name" value="CHAPERONINS_CPN60"/>
    <property type="match status" value="1"/>
</dbReference>
<sequence length="548" mass="57286">MAAKDVKFGNDARVKMLRGVNVLADAVKVTLGPKGRNVVLDKSFGAPTITKDGVSVAREIELEDKFENMGAQMVKEVASKANDAAGDGTTTATVLAQSIITEGLKAVAAGMNPMDLKRGIDKAVAAAVEELKALSVPCSDSKAIAQVGTISANSDETVGKLIAEAMDKVGKEGVITVEDGTGLQDELDVVEGMQFDRGYLSPYFINKPETGAVELESPFILLADKKISNIREMLPVLEAVAKAGKPLLIIAEDVEGEALATLVVNTMRGIVKVAAVKAPGFGDRRKAMLQDIATLTGGTVISEEIGMELEKATLEDLGQAKRVVINKDTTTIIDGVGEEAAIQGRVAQIRQQIEEATSDYDREKLQERVAKLAGGVAVIKVGAATEVEMKEKKARVEDALHATRAAVEEGVVAGGGVALIRVASKIADLKGQNEDQNVGIKVALRAMEAPLRQIVLNCGEEPSVVANTVKGGDGNYGYNAATEEYGNMIDMGILDPTKVTRSALQYAASVAGLMITTECMVTDLPKSDAPDLGAAGGMGGMGGMGGMM</sequence>
<protein>
    <recommendedName>
        <fullName evidence="2">Chaperonin GroEL</fullName>
        <ecNumber evidence="2">5.6.1.7</ecNumber>
    </recommendedName>
    <alternativeName>
        <fullName evidence="2">60 kDa chaperonin</fullName>
    </alternativeName>
    <alternativeName>
        <fullName evidence="2">Chaperonin-60</fullName>
        <shortName evidence="2">Cpn60</shortName>
    </alternativeName>
</protein>
<feature type="initiator methionine" description="Removed" evidence="1">
    <location>
        <position position="1"/>
    </location>
</feature>
<feature type="chain" id="PRO_0000063522" description="Chaperonin GroEL">
    <location>
        <begin position="2"/>
        <end position="548"/>
    </location>
</feature>
<feature type="binding site" evidence="2">
    <location>
        <begin position="30"/>
        <end position="33"/>
    </location>
    <ligand>
        <name>ATP</name>
        <dbReference type="ChEBI" id="CHEBI:30616"/>
    </ligand>
</feature>
<feature type="binding site" evidence="2">
    <location>
        <position position="51"/>
    </location>
    <ligand>
        <name>ATP</name>
        <dbReference type="ChEBI" id="CHEBI:30616"/>
    </ligand>
</feature>
<feature type="binding site" evidence="2">
    <location>
        <begin position="87"/>
        <end position="91"/>
    </location>
    <ligand>
        <name>ATP</name>
        <dbReference type="ChEBI" id="CHEBI:30616"/>
    </ligand>
</feature>
<feature type="binding site" evidence="2">
    <location>
        <position position="415"/>
    </location>
    <ligand>
        <name>ATP</name>
        <dbReference type="ChEBI" id="CHEBI:30616"/>
    </ligand>
</feature>
<feature type="binding site" evidence="2">
    <location>
        <begin position="479"/>
        <end position="481"/>
    </location>
    <ligand>
        <name>ATP</name>
        <dbReference type="ChEBI" id="CHEBI:30616"/>
    </ligand>
</feature>
<feature type="binding site" evidence="2">
    <location>
        <position position="495"/>
    </location>
    <ligand>
        <name>ATP</name>
        <dbReference type="ChEBI" id="CHEBI:30616"/>
    </ligand>
</feature>
<accession>P0A1D3</accession>
<accession>P48217</accession>